<accession>B1X974</accession>
<keyword id="KW-0378">Hydrolase</keyword>
<keyword id="KW-0460">Magnesium</keyword>
<keyword id="KW-0479">Metal-binding</keyword>
<keyword id="KW-0546">Nucleotide metabolism</keyword>
<comment type="function">
    <text evidence="1">This enzyme is involved in nucleotide metabolism: it produces dUMP, the immediate precursor of thymidine nucleotides and it decreases the intracellular concentration of dUTP so that uracil cannot be incorporated into DNA.</text>
</comment>
<comment type="catalytic activity">
    <reaction evidence="1">
        <text>dUTP + H2O = dUMP + diphosphate + H(+)</text>
        <dbReference type="Rhea" id="RHEA:10248"/>
        <dbReference type="ChEBI" id="CHEBI:15377"/>
        <dbReference type="ChEBI" id="CHEBI:15378"/>
        <dbReference type="ChEBI" id="CHEBI:33019"/>
        <dbReference type="ChEBI" id="CHEBI:61555"/>
        <dbReference type="ChEBI" id="CHEBI:246422"/>
        <dbReference type="EC" id="3.6.1.23"/>
    </reaction>
</comment>
<comment type="cofactor">
    <cofactor evidence="1">
        <name>Mg(2+)</name>
        <dbReference type="ChEBI" id="CHEBI:18420"/>
    </cofactor>
</comment>
<comment type="pathway">
    <text evidence="1">Pyrimidine metabolism; dUMP biosynthesis; dUMP from dCTP (dUTP route): step 2/2.</text>
</comment>
<comment type="subunit">
    <text evidence="1">Homotrimer.</text>
</comment>
<comment type="similarity">
    <text evidence="1">Belongs to the dUTPase family.</text>
</comment>
<feature type="chain" id="PRO_1000094959" description="Deoxyuridine 5'-triphosphate nucleotidohydrolase">
    <location>
        <begin position="1"/>
        <end position="151"/>
    </location>
</feature>
<feature type="binding site" evidence="1">
    <location>
        <begin position="70"/>
        <end position="72"/>
    </location>
    <ligand>
        <name>substrate</name>
    </ligand>
</feature>
<feature type="binding site" evidence="1">
    <location>
        <position position="83"/>
    </location>
    <ligand>
        <name>substrate</name>
    </ligand>
</feature>
<feature type="binding site" evidence="1">
    <location>
        <begin position="87"/>
        <end position="89"/>
    </location>
    <ligand>
        <name>substrate</name>
    </ligand>
</feature>
<feature type="binding site" evidence="1">
    <location>
        <position position="97"/>
    </location>
    <ligand>
        <name>substrate</name>
    </ligand>
</feature>
<proteinExistence type="inferred from homology"/>
<gene>
    <name evidence="1" type="primary">dut</name>
    <name type="ordered locus">ECDH10B_3822</name>
</gene>
<sequence length="151" mass="16155">MKKIDVKILDPRVGKEFPLPTYATSGSAGLDLRACLNDAVELAPGDTTLVPTGLAIHIADPSLAAMMLPRSGLGHKHGIVLGNLVGLIDSDYQGQLMISVWNRGQDSFTIQPGERIAQMIFVPVVQAEFNLVEDFDATDRGEGGFGHSGRQ</sequence>
<organism>
    <name type="scientific">Escherichia coli (strain K12 / DH10B)</name>
    <dbReference type="NCBI Taxonomy" id="316385"/>
    <lineage>
        <taxon>Bacteria</taxon>
        <taxon>Pseudomonadati</taxon>
        <taxon>Pseudomonadota</taxon>
        <taxon>Gammaproteobacteria</taxon>
        <taxon>Enterobacterales</taxon>
        <taxon>Enterobacteriaceae</taxon>
        <taxon>Escherichia</taxon>
    </lineage>
</organism>
<reference key="1">
    <citation type="journal article" date="2008" name="J. Bacteriol.">
        <title>The complete genome sequence of Escherichia coli DH10B: insights into the biology of a laboratory workhorse.</title>
        <authorList>
            <person name="Durfee T."/>
            <person name="Nelson R."/>
            <person name="Baldwin S."/>
            <person name="Plunkett G. III"/>
            <person name="Burland V."/>
            <person name="Mau B."/>
            <person name="Petrosino J.F."/>
            <person name="Qin X."/>
            <person name="Muzny D.M."/>
            <person name="Ayele M."/>
            <person name="Gibbs R.A."/>
            <person name="Csorgo B."/>
            <person name="Posfai G."/>
            <person name="Weinstock G.M."/>
            <person name="Blattner F.R."/>
        </authorList>
    </citation>
    <scope>NUCLEOTIDE SEQUENCE [LARGE SCALE GENOMIC DNA]</scope>
    <source>
        <strain>K12 / DH10B</strain>
    </source>
</reference>
<dbReference type="EC" id="3.6.1.23" evidence="1"/>
<dbReference type="EMBL" id="CP000948">
    <property type="protein sequence ID" value="ACB04690.1"/>
    <property type="molecule type" value="Genomic_DNA"/>
</dbReference>
<dbReference type="SMR" id="B1X974"/>
<dbReference type="KEGG" id="ecd:ECDH10B_3822"/>
<dbReference type="HOGENOM" id="CLU_068508_1_1_6"/>
<dbReference type="UniPathway" id="UPA00610">
    <property type="reaction ID" value="UER00666"/>
</dbReference>
<dbReference type="GO" id="GO:0004170">
    <property type="term" value="F:dUTP diphosphatase activity"/>
    <property type="evidence" value="ECO:0007669"/>
    <property type="project" value="UniProtKB-UniRule"/>
</dbReference>
<dbReference type="GO" id="GO:0000287">
    <property type="term" value="F:magnesium ion binding"/>
    <property type="evidence" value="ECO:0007669"/>
    <property type="project" value="UniProtKB-UniRule"/>
</dbReference>
<dbReference type="GO" id="GO:0006226">
    <property type="term" value="P:dUMP biosynthetic process"/>
    <property type="evidence" value="ECO:0007669"/>
    <property type="project" value="UniProtKB-UniRule"/>
</dbReference>
<dbReference type="GO" id="GO:0046081">
    <property type="term" value="P:dUTP catabolic process"/>
    <property type="evidence" value="ECO:0007669"/>
    <property type="project" value="InterPro"/>
</dbReference>
<dbReference type="CDD" id="cd07557">
    <property type="entry name" value="trimeric_dUTPase"/>
    <property type="match status" value="1"/>
</dbReference>
<dbReference type="FunFam" id="2.70.40.10:FF:000002">
    <property type="entry name" value="dUTP diphosphatase"/>
    <property type="match status" value="1"/>
</dbReference>
<dbReference type="Gene3D" id="2.70.40.10">
    <property type="match status" value="1"/>
</dbReference>
<dbReference type="HAMAP" id="MF_00116">
    <property type="entry name" value="dUTPase_bact"/>
    <property type="match status" value="1"/>
</dbReference>
<dbReference type="InterPro" id="IPR008181">
    <property type="entry name" value="dUTPase"/>
</dbReference>
<dbReference type="InterPro" id="IPR029054">
    <property type="entry name" value="dUTPase-like"/>
</dbReference>
<dbReference type="InterPro" id="IPR036157">
    <property type="entry name" value="dUTPase-like_sf"/>
</dbReference>
<dbReference type="InterPro" id="IPR033704">
    <property type="entry name" value="dUTPase_trimeric"/>
</dbReference>
<dbReference type="NCBIfam" id="TIGR00576">
    <property type="entry name" value="dut"/>
    <property type="match status" value="1"/>
</dbReference>
<dbReference type="NCBIfam" id="NF001862">
    <property type="entry name" value="PRK00601.1"/>
    <property type="match status" value="1"/>
</dbReference>
<dbReference type="PANTHER" id="PTHR11241">
    <property type="entry name" value="DEOXYURIDINE 5'-TRIPHOSPHATE NUCLEOTIDOHYDROLASE"/>
    <property type="match status" value="1"/>
</dbReference>
<dbReference type="PANTHER" id="PTHR11241:SF0">
    <property type="entry name" value="DEOXYURIDINE 5'-TRIPHOSPHATE NUCLEOTIDOHYDROLASE"/>
    <property type="match status" value="1"/>
</dbReference>
<dbReference type="Pfam" id="PF00692">
    <property type="entry name" value="dUTPase"/>
    <property type="match status" value="1"/>
</dbReference>
<dbReference type="SUPFAM" id="SSF51283">
    <property type="entry name" value="dUTPase-like"/>
    <property type="match status" value="1"/>
</dbReference>
<evidence type="ECO:0000255" key="1">
    <source>
        <dbReference type="HAMAP-Rule" id="MF_00116"/>
    </source>
</evidence>
<name>DUT_ECODH</name>
<protein>
    <recommendedName>
        <fullName evidence="1">Deoxyuridine 5'-triphosphate nucleotidohydrolase</fullName>
        <shortName evidence="1">dUTPase</shortName>
        <ecNumber evidence="1">3.6.1.23</ecNumber>
    </recommendedName>
    <alternativeName>
        <fullName evidence="1">dUTP pyrophosphatase</fullName>
    </alternativeName>
</protein>